<proteinExistence type="inferred from homology"/>
<reference key="1">
    <citation type="submission" date="2007-04" db="EMBL/GenBank/DDBJ databases">
        <title>Complete sequence of Pseudomonas mendocina ymp.</title>
        <authorList>
            <consortium name="US DOE Joint Genome Institute"/>
            <person name="Copeland A."/>
            <person name="Lucas S."/>
            <person name="Lapidus A."/>
            <person name="Barry K."/>
            <person name="Glavina del Rio T."/>
            <person name="Dalin E."/>
            <person name="Tice H."/>
            <person name="Pitluck S."/>
            <person name="Kiss H."/>
            <person name="Brettin T."/>
            <person name="Detter J.C."/>
            <person name="Bruce D."/>
            <person name="Han C."/>
            <person name="Schmutz J."/>
            <person name="Larimer F."/>
            <person name="Land M."/>
            <person name="Hauser L."/>
            <person name="Kyrpides N."/>
            <person name="Mikhailova N."/>
            <person name="Hersman L."/>
            <person name="Dubois J."/>
            <person name="Maurice P."/>
            <person name="Richardson P."/>
        </authorList>
    </citation>
    <scope>NUCLEOTIDE SEQUENCE [LARGE SCALE GENOMIC DNA]</scope>
    <source>
        <strain>ymp</strain>
    </source>
</reference>
<comment type="function">
    <text evidence="1">This protein specifically catalyzes the removal of signal peptides from prolipoproteins.</text>
</comment>
<comment type="catalytic activity">
    <reaction evidence="1">
        <text>Release of signal peptides from bacterial membrane prolipoproteins. Hydrolyzes -Xaa-Yaa-Zaa-|-(S,diacylglyceryl)Cys-, in which Xaa is hydrophobic (preferably Leu), and Yaa (Ala or Ser) and Zaa (Gly or Ala) have small, neutral side chains.</text>
        <dbReference type="EC" id="3.4.23.36"/>
    </reaction>
</comment>
<comment type="pathway">
    <text evidence="1">Protein modification; lipoprotein biosynthesis (signal peptide cleavage).</text>
</comment>
<comment type="subcellular location">
    <subcellularLocation>
        <location evidence="1">Cell inner membrane</location>
        <topology evidence="1">Multi-pass membrane protein</topology>
    </subcellularLocation>
</comment>
<comment type="similarity">
    <text evidence="1">Belongs to the peptidase A8 family.</text>
</comment>
<keyword id="KW-0064">Aspartyl protease</keyword>
<keyword id="KW-0997">Cell inner membrane</keyword>
<keyword id="KW-1003">Cell membrane</keyword>
<keyword id="KW-0378">Hydrolase</keyword>
<keyword id="KW-0472">Membrane</keyword>
<keyword id="KW-0645">Protease</keyword>
<keyword id="KW-0812">Transmembrane</keyword>
<keyword id="KW-1133">Transmembrane helix</keyword>
<gene>
    <name evidence="1" type="primary">lspA</name>
    <name type="ordered locus">Pmen_0954</name>
</gene>
<organism>
    <name type="scientific">Ectopseudomonas mendocina (strain ymp)</name>
    <name type="common">Pseudomonas mendocina</name>
    <dbReference type="NCBI Taxonomy" id="399739"/>
    <lineage>
        <taxon>Bacteria</taxon>
        <taxon>Pseudomonadati</taxon>
        <taxon>Pseudomonadota</taxon>
        <taxon>Gammaproteobacteria</taxon>
        <taxon>Pseudomonadales</taxon>
        <taxon>Pseudomonadaceae</taxon>
        <taxon>Ectopseudomonas</taxon>
    </lineage>
</organism>
<dbReference type="EC" id="3.4.23.36" evidence="1"/>
<dbReference type="EMBL" id="CP000680">
    <property type="protein sequence ID" value="ABP83722.1"/>
    <property type="molecule type" value="Genomic_DNA"/>
</dbReference>
<dbReference type="SMR" id="A4XQV6"/>
<dbReference type="STRING" id="399739.Pmen_0954"/>
<dbReference type="KEGG" id="pmy:Pmen_0954"/>
<dbReference type="eggNOG" id="COG0597">
    <property type="taxonomic scope" value="Bacteria"/>
</dbReference>
<dbReference type="HOGENOM" id="CLU_083252_4_0_6"/>
<dbReference type="OrthoDB" id="9810259at2"/>
<dbReference type="UniPathway" id="UPA00665"/>
<dbReference type="GO" id="GO:0005886">
    <property type="term" value="C:plasma membrane"/>
    <property type="evidence" value="ECO:0007669"/>
    <property type="project" value="UniProtKB-SubCell"/>
</dbReference>
<dbReference type="GO" id="GO:0004190">
    <property type="term" value="F:aspartic-type endopeptidase activity"/>
    <property type="evidence" value="ECO:0007669"/>
    <property type="project" value="UniProtKB-UniRule"/>
</dbReference>
<dbReference type="GO" id="GO:0006508">
    <property type="term" value="P:proteolysis"/>
    <property type="evidence" value="ECO:0007669"/>
    <property type="project" value="UniProtKB-KW"/>
</dbReference>
<dbReference type="HAMAP" id="MF_00161">
    <property type="entry name" value="LspA"/>
    <property type="match status" value="1"/>
</dbReference>
<dbReference type="InterPro" id="IPR001872">
    <property type="entry name" value="Peptidase_A8"/>
</dbReference>
<dbReference type="NCBIfam" id="TIGR00077">
    <property type="entry name" value="lspA"/>
    <property type="match status" value="1"/>
</dbReference>
<dbReference type="PANTHER" id="PTHR33695">
    <property type="entry name" value="LIPOPROTEIN SIGNAL PEPTIDASE"/>
    <property type="match status" value="1"/>
</dbReference>
<dbReference type="PANTHER" id="PTHR33695:SF1">
    <property type="entry name" value="LIPOPROTEIN SIGNAL PEPTIDASE"/>
    <property type="match status" value="1"/>
</dbReference>
<dbReference type="Pfam" id="PF01252">
    <property type="entry name" value="Peptidase_A8"/>
    <property type="match status" value="1"/>
</dbReference>
<dbReference type="PRINTS" id="PR00781">
    <property type="entry name" value="LIPOSIGPTASE"/>
</dbReference>
<dbReference type="PROSITE" id="PS00855">
    <property type="entry name" value="SPASE_II"/>
    <property type="match status" value="1"/>
</dbReference>
<name>LSPA_ECTM1</name>
<protein>
    <recommendedName>
        <fullName evidence="1">Lipoprotein signal peptidase</fullName>
        <ecNumber evidence="1">3.4.23.36</ecNumber>
    </recommendedName>
    <alternativeName>
        <fullName evidence="1">Prolipoprotein signal peptidase</fullName>
    </alternativeName>
    <alternativeName>
        <fullName evidence="1">Signal peptidase II</fullName>
        <shortName evidence="1">SPase II</shortName>
    </alternativeName>
</protein>
<accession>A4XQV6</accession>
<evidence type="ECO:0000255" key="1">
    <source>
        <dbReference type="HAMAP-Rule" id="MF_00161"/>
    </source>
</evidence>
<sequence>MPESSRFGHLPWLLLSVLILVADRVTKDIFEGTLSMYQRIEVIPGYFDWTLAYNTGAAFSFLADAAGWQRWFFAAIAIVVSVVLVVWLKRLKRHETLLAVALAMVLGGALGNLYDRVVLGHVVDFILVHWQSRWFFPAFNLADTFITIGAILLALDMFKSDKSAKEAAQ</sequence>
<feature type="chain" id="PRO_1000058238" description="Lipoprotein signal peptidase">
    <location>
        <begin position="1"/>
        <end position="169"/>
    </location>
</feature>
<feature type="transmembrane region" description="Helical" evidence="1">
    <location>
        <begin position="1"/>
        <end position="21"/>
    </location>
</feature>
<feature type="transmembrane region" description="Helical" evidence="1">
    <location>
        <begin position="68"/>
        <end position="88"/>
    </location>
</feature>
<feature type="transmembrane region" description="Helical" evidence="1">
    <location>
        <begin position="94"/>
        <end position="114"/>
    </location>
</feature>
<feature type="transmembrane region" description="Helical" evidence="1">
    <location>
        <begin position="135"/>
        <end position="155"/>
    </location>
</feature>
<feature type="active site" evidence="1">
    <location>
        <position position="124"/>
    </location>
</feature>
<feature type="active site" evidence="1">
    <location>
        <position position="143"/>
    </location>
</feature>